<name>NOGG_CHICK</name>
<keyword id="KW-0891">Chondrogenesis</keyword>
<keyword id="KW-0217">Developmental protein</keyword>
<keyword id="KW-0221">Differentiation</keyword>
<keyword id="KW-1015">Disulfide bond</keyword>
<keyword id="KW-0325">Glycoprotein</keyword>
<keyword id="KW-1185">Reference proteome</keyword>
<keyword id="KW-0964">Secreted</keyword>
<keyword id="KW-0732">Signal</keyword>
<comment type="function">
    <text>Inhibitor of bone morphogenetic proteins (BMP) signaling. Controls somitogenesis by sequestering the BMP-4 activity which in turn differentiates distinct subtypes of the mesoderm along the mediolateral axis.</text>
</comment>
<comment type="subunit">
    <text evidence="1">Homodimer.</text>
</comment>
<comment type="subcellular location">
    <subcellularLocation>
        <location>Secreted</location>
    </subcellularLocation>
</comment>
<comment type="developmental stage">
    <text>At stage 8 (4-6 somites) expressed in two prominent regions, the notochord and the one posterior to Hensen node. At stage 14 (20 somites) expressed in the lateral border of the segmental plate. As the somite stage proceeds, detected in the lateral and medial portion of a young and old somite respectively and is also localized in the notochord and the roof plate of the neural tube.</text>
</comment>
<comment type="induction">
    <text>By sonic ectopic hedgehog.</text>
</comment>
<comment type="similarity">
    <text evidence="3">Belongs to the noggin family.</text>
</comment>
<protein>
    <recommendedName>
        <fullName>Noggin</fullName>
    </recommendedName>
    <alternativeName>
        <fullName>cNoggin</fullName>
    </alternativeName>
</protein>
<sequence>MDHSQCLVTIYAAAVLLGLRLQQGSCQHYLHIRPAPSDNLPLVDLIEHPDPIFDPKEKDLNETLLRSLMGGHFDPNFMAMSLPEDRLGVDDLAELDLLLRQRPSGAMPGEIKGLEFYDGLQPGKKHRLSKKLRRKLQMWLWSQTFCPVLYTWNDLGSRFWPRYVKVGSCYSKRSCSVPEGMVCKPAKSVHLTILRWRCQRRGGQRCTWIPIQYPIIAECKCSC</sequence>
<dbReference type="EMBL" id="AF057364">
    <property type="protein sequence ID" value="AAC83570.1"/>
    <property type="molecule type" value="mRNA"/>
</dbReference>
<dbReference type="EMBL" id="AB013493">
    <property type="protein sequence ID" value="BAA75065.1"/>
    <property type="molecule type" value="mRNA"/>
</dbReference>
<dbReference type="RefSeq" id="NP_989454.1">
    <property type="nucleotide sequence ID" value="NM_204123.1"/>
</dbReference>
<dbReference type="SMR" id="O93525"/>
<dbReference type="FunCoup" id="O93525">
    <property type="interactions" value="3"/>
</dbReference>
<dbReference type="STRING" id="9031.ENSGALP00000004907"/>
<dbReference type="GlyCosmos" id="O93525">
    <property type="glycosylation" value="1 site, No reported glycans"/>
</dbReference>
<dbReference type="GlyGen" id="O93525">
    <property type="glycosylation" value="1 site"/>
</dbReference>
<dbReference type="PaxDb" id="9031-ENSGALP00000004907"/>
<dbReference type="GeneID" id="373912"/>
<dbReference type="KEGG" id="gga:373912"/>
<dbReference type="CTD" id="9241"/>
<dbReference type="VEuPathDB" id="HostDB:geneid_373912"/>
<dbReference type="eggNOG" id="KOG4485">
    <property type="taxonomic scope" value="Eukaryota"/>
</dbReference>
<dbReference type="InParanoid" id="O93525"/>
<dbReference type="OrthoDB" id="5950649at2759"/>
<dbReference type="PhylomeDB" id="O93525"/>
<dbReference type="PRO" id="PR:O93525"/>
<dbReference type="Proteomes" id="UP000000539">
    <property type="component" value="Unassembled WGS sequence"/>
</dbReference>
<dbReference type="GO" id="GO:0005615">
    <property type="term" value="C:extracellular space"/>
    <property type="evidence" value="ECO:0000318"/>
    <property type="project" value="GO_Central"/>
</dbReference>
<dbReference type="GO" id="GO:0051216">
    <property type="term" value="P:cartilage development"/>
    <property type="evidence" value="ECO:0007669"/>
    <property type="project" value="UniProtKB-KW"/>
</dbReference>
<dbReference type="GO" id="GO:0009953">
    <property type="term" value="P:dorsal/ventral pattern formation"/>
    <property type="evidence" value="ECO:0000318"/>
    <property type="project" value="GO_Central"/>
</dbReference>
<dbReference type="GO" id="GO:0030514">
    <property type="term" value="P:negative regulation of BMP signaling pathway"/>
    <property type="evidence" value="ECO:0000315"/>
    <property type="project" value="UniProtKB"/>
</dbReference>
<dbReference type="GO" id="GO:1902747">
    <property type="term" value="P:negative regulation of lens fiber cell differentiation"/>
    <property type="evidence" value="ECO:0000304"/>
    <property type="project" value="AgBase"/>
</dbReference>
<dbReference type="GO" id="GO:0051151">
    <property type="term" value="P:negative regulation of smooth muscle cell differentiation"/>
    <property type="evidence" value="ECO:0000315"/>
    <property type="project" value="UniProtKB"/>
</dbReference>
<dbReference type="GO" id="GO:0001649">
    <property type="term" value="P:osteoblast differentiation"/>
    <property type="evidence" value="ECO:0000318"/>
    <property type="project" value="GO_Central"/>
</dbReference>
<dbReference type="FunFam" id="1.10.287.520:FF:000001">
    <property type="entry name" value="Noggin"/>
    <property type="match status" value="1"/>
</dbReference>
<dbReference type="Gene3D" id="2.10.90.10">
    <property type="entry name" value="Cystine-knot cytokines"/>
    <property type="match status" value="1"/>
</dbReference>
<dbReference type="Gene3D" id="1.10.287.520">
    <property type="entry name" value="Helix hairpin bin"/>
    <property type="match status" value="1"/>
</dbReference>
<dbReference type="InterPro" id="IPR029034">
    <property type="entry name" value="Cystine-knot_cytokine"/>
</dbReference>
<dbReference type="InterPro" id="IPR008717">
    <property type="entry name" value="Noggin"/>
</dbReference>
<dbReference type="PANTHER" id="PTHR10494">
    <property type="entry name" value="BONE MORPHOGENETIC PROTEIN INHIBITOR, NOGGIN"/>
    <property type="match status" value="1"/>
</dbReference>
<dbReference type="PANTHER" id="PTHR10494:SF5">
    <property type="entry name" value="NOGGIN"/>
    <property type="match status" value="1"/>
</dbReference>
<dbReference type="Pfam" id="PF05806">
    <property type="entry name" value="Noggin"/>
    <property type="match status" value="1"/>
</dbReference>
<dbReference type="PIRSF" id="PIRSF008129">
    <property type="entry name" value="Noggin"/>
    <property type="match status" value="1"/>
</dbReference>
<dbReference type="SUPFAM" id="SSF57501">
    <property type="entry name" value="Cystine-knot cytokines"/>
    <property type="match status" value="1"/>
</dbReference>
<reference key="1">
    <citation type="journal article" date="1999" name="Development">
        <title>BMPs negatively regulate structure and function of the limb apical ectodermal ridge.</title>
        <authorList>
            <person name="Pizette S."/>
            <person name="Niswander L."/>
        </authorList>
    </citation>
    <scope>NUCLEOTIDE SEQUENCE [MRNA]</scope>
    <source>
        <strain>Hamburger-Hamilton</strain>
        <tissue>Embryo</tissue>
    </source>
</reference>
<reference key="2">
    <citation type="journal article" date="1998" name="Dev. Biol.">
        <title>Somitogenesis controlled by Noggin.</title>
        <authorList>
            <person name="Tonegawa A."/>
            <person name="Takahashi Y."/>
        </authorList>
    </citation>
    <scope>NUCLEOTIDE SEQUENCE [MRNA] OF 54-220</scope>
</reference>
<accession>O93525</accession>
<accession>O73674</accession>
<feature type="signal peptide" evidence="2">
    <location>
        <begin position="1"/>
        <end position="26"/>
    </location>
</feature>
<feature type="chain" id="PRO_0000019816" description="Noggin">
    <location>
        <begin position="27"/>
        <end position="223"/>
    </location>
</feature>
<feature type="glycosylation site" description="N-linked (GlcNAc...) asparagine" evidence="2">
    <location>
        <position position="61"/>
    </location>
</feature>
<feature type="disulfide bond" evidence="1">
    <location>
        <begin position="146"/>
        <end position="183"/>
    </location>
</feature>
<feature type="disulfide bond" evidence="1">
    <location>
        <begin position="169"/>
        <end position="219"/>
    </location>
</feature>
<feature type="disulfide bond" evidence="1">
    <location>
        <begin position="175"/>
        <end position="221"/>
    </location>
</feature>
<feature type="disulfide bond" evidence="1">
    <location>
        <begin position="198"/>
        <end position="206"/>
    </location>
</feature>
<gene>
    <name type="primary">NOG</name>
</gene>
<organism>
    <name type="scientific">Gallus gallus</name>
    <name type="common">Chicken</name>
    <dbReference type="NCBI Taxonomy" id="9031"/>
    <lineage>
        <taxon>Eukaryota</taxon>
        <taxon>Metazoa</taxon>
        <taxon>Chordata</taxon>
        <taxon>Craniata</taxon>
        <taxon>Vertebrata</taxon>
        <taxon>Euteleostomi</taxon>
        <taxon>Archelosauria</taxon>
        <taxon>Archosauria</taxon>
        <taxon>Dinosauria</taxon>
        <taxon>Saurischia</taxon>
        <taxon>Theropoda</taxon>
        <taxon>Coelurosauria</taxon>
        <taxon>Aves</taxon>
        <taxon>Neognathae</taxon>
        <taxon>Galloanserae</taxon>
        <taxon>Galliformes</taxon>
        <taxon>Phasianidae</taxon>
        <taxon>Phasianinae</taxon>
        <taxon>Gallus</taxon>
    </lineage>
</organism>
<evidence type="ECO:0000250" key="1"/>
<evidence type="ECO:0000255" key="2"/>
<evidence type="ECO:0000305" key="3"/>
<proteinExistence type="evidence at transcript level"/>